<feature type="chain" id="PRO_0000166818" description="Peptide chain release factor 2">
    <location>
        <begin position="1"/>
        <end position="365"/>
    </location>
</feature>
<feature type="modified residue" description="N5-methylglutamine" evidence="2">
    <location>
        <position position="252"/>
    </location>
</feature>
<comment type="function">
    <text evidence="2">Peptide chain release factor 2 directs the termination of translation in response to the peptide chain termination codons UGA and UAA.</text>
</comment>
<comment type="subcellular location">
    <subcellularLocation>
        <location evidence="2">Cytoplasm</location>
    </subcellularLocation>
</comment>
<comment type="PTM">
    <text evidence="2">Methylated by PrmC. Methylation increases the termination efficiency of RF2.</text>
</comment>
<comment type="miscellaneous">
    <text evidence="1">The gene for this protein contains a UGA in-frame termination codon after Leu-25; a naturally occurring frameshift enables complete translation of RF-2. This provides a mechanism for the protein to regulate its own production (By similarity).</text>
</comment>
<comment type="similarity">
    <text evidence="2">Belongs to the prokaryotic/mitochondrial release factor family.</text>
</comment>
<proteinExistence type="inferred from homology"/>
<reference key="1">
    <citation type="journal article" date="2001" name="Nature">
        <title>Genome sequence of enterohaemorrhagic Escherichia coli O157:H7.</title>
        <authorList>
            <person name="Perna N.T."/>
            <person name="Plunkett G. III"/>
            <person name="Burland V."/>
            <person name="Mau B."/>
            <person name="Glasner J.D."/>
            <person name="Rose D.J."/>
            <person name="Mayhew G.F."/>
            <person name="Evans P.S."/>
            <person name="Gregor J."/>
            <person name="Kirkpatrick H.A."/>
            <person name="Posfai G."/>
            <person name="Hackett J."/>
            <person name="Klink S."/>
            <person name="Boutin A."/>
            <person name="Shao Y."/>
            <person name="Miller L."/>
            <person name="Grotbeck E.J."/>
            <person name="Davis N.W."/>
            <person name="Lim A."/>
            <person name="Dimalanta E.T."/>
            <person name="Potamousis K."/>
            <person name="Apodaca J."/>
            <person name="Anantharaman T.S."/>
            <person name="Lin J."/>
            <person name="Yen G."/>
            <person name="Schwartz D.C."/>
            <person name="Welch R.A."/>
            <person name="Blattner F.R."/>
        </authorList>
    </citation>
    <scope>NUCLEOTIDE SEQUENCE [LARGE SCALE GENOMIC DNA]</scope>
    <source>
        <strain>O157:H7 / EDL933 / ATCC 700927 / EHEC</strain>
    </source>
</reference>
<reference key="2">
    <citation type="journal article" date="2001" name="DNA Res.">
        <title>Complete genome sequence of enterohemorrhagic Escherichia coli O157:H7 and genomic comparison with a laboratory strain K-12.</title>
        <authorList>
            <person name="Hayashi T."/>
            <person name="Makino K."/>
            <person name="Ohnishi M."/>
            <person name="Kurokawa K."/>
            <person name="Ishii K."/>
            <person name="Yokoyama K."/>
            <person name="Han C.-G."/>
            <person name="Ohtsubo E."/>
            <person name="Nakayama K."/>
            <person name="Murata T."/>
            <person name="Tanaka M."/>
            <person name="Tobe T."/>
            <person name="Iida T."/>
            <person name="Takami H."/>
            <person name="Honda T."/>
            <person name="Sasakawa C."/>
            <person name="Ogasawara N."/>
            <person name="Yasunaga T."/>
            <person name="Kuhara S."/>
            <person name="Shiba T."/>
            <person name="Hattori M."/>
            <person name="Shinagawa H."/>
        </authorList>
    </citation>
    <scope>NUCLEOTIDE SEQUENCE [LARGE SCALE GENOMIC DNA]</scope>
    <source>
        <strain>O157:H7 / Sakai / RIMD 0509952 / EHEC</strain>
    </source>
</reference>
<name>RF2_ECO57</name>
<evidence type="ECO:0000250" key="1"/>
<evidence type="ECO:0000255" key="2">
    <source>
        <dbReference type="HAMAP-Rule" id="MF_00094"/>
    </source>
</evidence>
<organism>
    <name type="scientific">Escherichia coli O157:H7</name>
    <dbReference type="NCBI Taxonomy" id="83334"/>
    <lineage>
        <taxon>Bacteria</taxon>
        <taxon>Pseudomonadati</taxon>
        <taxon>Pseudomonadota</taxon>
        <taxon>Gammaproteobacteria</taxon>
        <taxon>Enterobacterales</taxon>
        <taxon>Enterobacteriaceae</taxon>
        <taxon>Escherichia</taxon>
    </lineage>
</organism>
<accession>P66024</accession>
<accession>Q8XD56</accession>
<protein>
    <recommendedName>
        <fullName evidence="2">Peptide chain release factor 2</fullName>
        <shortName evidence="2">RF-2</shortName>
    </recommendedName>
</protein>
<keyword id="KW-0963">Cytoplasm</keyword>
<keyword id="KW-0488">Methylation</keyword>
<keyword id="KW-0648">Protein biosynthesis</keyword>
<keyword id="KW-1185">Reference proteome</keyword>
<keyword id="KW-0688">Ribosomal frameshifting</keyword>
<sequence length="365" mass="41221">MFEINPVNNRIQDLTERSDVLRGYLDYDAKKERLEEVNAELEQPDVWNEPERAQALGKERSSLEAVVDTLDQMKQGLEDVSGLLELAVEADDEETFNEAVAELDALEEKLAQLEFRRMFSGEYDSADCYLDIQAGSGGTEAQDWASMLERMYLRWAESRGFKTEIIEESEGEVAGIKSVTIKISGDYAYGWLRTETGVHRLVRKSPFDSGGRRHTSFSSAFVYPEVDDDIDIEINPADLRIDVYRASGAGGQHVNRTESAVRITHIPTGIVTQCQNDRSQHKNKDQAMKQMKAKLYELEMQKKNAEKQAMEDNKSDIGWGSQIRSYVLDDSRIKDLRTGVETRNTQAVLDGSLDQFIEASLKAGL</sequence>
<gene>
    <name evidence="2" type="primary">prfB</name>
    <name type="ordered locus">Z4229</name>
    <name type="ordered locus">ECs3763</name>
</gene>
<dbReference type="EMBL" id="AE005174">
    <property type="protein sequence ID" value="AAG58019.1"/>
    <property type="molecule type" value="Genomic_DNA"/>
</dbReference>
<dbReference type="EMBL" id="BA000007">
    <property type="protein sequence ID" value="BAB37186.1"/>
    <property type="molecule type" value="Genomic_DNA"/>
</dbReference>
<dbReference type="PIR" id="C91099">
    <property type="entry name" value="C91099"/>
</dbReference>
<dbReference type="PIR" id="G85944">
    <property type="entry name" value="G85944"/>
</dbReference>
<dbReference type="RefSeq" id="NP_311790.1">
    <property type="nucleotide sequence ID" value="NC_002695.1"/>
</dbReference>
<dbReference type="RefSeq" id="WP_001701073.1">
    <property type="nucleotide sequence ID" value="NZ_VOAI01000003.1"/>
</dbReference>
<dbReference type="SMR" id="P66024"/>
<dbReference type="STRING" id="155864.Z4229"/>
<dbReference type="GeneID" id="916415"/>
<dbReference type="GeneID" id="93779111"/>
<dbReference type="KEGG" id="ece:Z4229"/>
<dbReference type="KEGG" id="ecs:ECs_3763"/>
<dbReference type="PATRIC" id="fig|386585.9.peg.3926"/>
<dbReference type="eggNOG" id="COG1186">
    <property type="taxonomic scope" value="Bacteria"/>
</dbReference>
<dbReference type="HOGENOM" id="CLU_220733_1_0_6"/>
<dbReference type="OMA" id="YVFHPYQ"/>
<dbReference type="Proteomes" id="UP000000558">
    <property type="component" value="Chromosome"/>
</dbReference>
<dbReference type="Proteomes" id="UP000002519">
    <property type="component" value="Chromosome"/>
</dbReference>
<dbReference type="GO" id="GO:0005737">
    <property type="term" value="C:cytoplasm"/>
    <property type="evidence" value="ECO:0007669"/>
    <property type="project" value="UniProtKB-SubCell"/>
</dbReference>
<dbReference type="GO" id="GO:0016149">
    <property type="term" value="F:translation release factor activity, codon specific"/>
    <property type="evidence" value="ECO:0007669"/>
    <property type="project" value="UniProtKB-UniRule"/>
</dbReference>
<dbReference type="GO" id="GO:0075523">
    <property type="term" value="P:viral translational frameshifting"/>
    <property type="evidence" value="ECO:0007669"/>
    <property type="project" value="UniProtKB-KW"/>
</dbReference>
<dbReference type="FunFam" id="1.20.58.410:FF:000001">
    <property type="entry name" value="Peptide chain release factor 2"/>
    <property type="match status" value="1"/>
</dbReference>
<dbReference type="FunFam" id="3.30.160.20:FF:000010">
    <property type="entry name" value="Peptide chain release factor 2"/>
    <property type="match status" value="1"/>
</dbReference>
<dbReference type="Gene3D" id="3.30.160.20">
    <property type="match status" value="1"/>
</dbReference>
<dbReference type="Gene3D" id="3.30.70.1660">
    <property type="match status" value="1"/>
</dbReference>
<dbReference type="Gene3D" id="1.20.58.410">
    <property type="entry name" value="Release factor"/>
    <property type="match status" value="1"/>
</dbReference>
<dbReference type="HAMAP" id="MF_00094">
    <property type="entry name" value="Rel_fac_2"/>
    <property type="match status" value="1"/>
</dbReference>
<dbReference type="InterPro" id="IPR005139">
    <property type="entry name" value="PCRF"/>
</dbReference>
<dbReference type="InterPro" id="IPR000352">
    <property type="entry name" value="Pep_chain_release_fac_I"/>
</dbReference>
<dbReference type="InterPro" id="IPR045853">
    <property type="entry name" value="Pep_chain_release_fac_I_sf"/>
</dbReference>
<dbReference type="InterPro" id="IPR004374">
    <property type="entry name" value="PrfB"/>
</dbReference>
<dbReference type="NCBIfam" id="TIGR00020">
    <property type="entry name" value="prfB"/>
    <property type="match status" value="1"/>
</dbReference>
<dbReference type="PANTHER" id="PTHR43116:SF3">
    <property type="entry name" value="CLASS I PEPTIDE CHAIN RELEASE FACTOR"/>
    <property type="match status" value="1"/>
</dbReference>
<dbReference type="PANTHER" id="PTHR43116">
    <property type="entry name" value="PEPTIDE CHAIN RELEASE FACTOR 2"/>
    <property type="match status" value="1"/>
</dbReference>
<dbReference type="Pfam" id="PF03462">
    <property type="entry name" value="PCRF"/>
    <property type="match status" value="1"/>
</dbReference>
<dbReference type="Pfam" id="PF00472">
    <property type="entry name" value="RF-1"/>
    <property type="match status" value="1"/>
</dbReference>
<dbReference type="SMART" id="SM00937">
    <property type="entry name" value="PCRF"/>
    <property type="match status" value="1"/>
</dbReference>
<dbReference type="SUPFAM" id="SSF75620">
    <property type="entry name" value="Release factor"/>
    <property type="match status" value="1"/>
</dbReference>
<dbReference type="PROSITE" id="PS00745">
    <property type="entry name" value="RF_PROK_I"/>
    <property type="match status" value="1"/>
</dbReference>